<dbReference type="EC" id="6.3.5.7" evidence="1"/>
<dbReference type="EMBL" id="CP001186">
    <property type="protein sequence ID" value="ACK95723.1"/>
    <property type="molecule type" value="Genomic_DNA"/>
</dbReference>
<dbReference type="RefSeq" id="WP_000051441.1">
    <property type="nucleotide sequence ID" value="NC_011772.1"/>
</dbReference>
<dbReference type="SMR" id="B7IUX9"/>
<dbReference type="KEGG" id="bcg:BCG9842_B4953"/>
<dbReference type="HOGENOM" id="CLU_009600_0_3_9"/>
<dbReference type="Proteomes" id="UP000006744">
    <property type="component" value="Chromosome"/>
</dbReference>
<dbReference type="GO" id="GO:0030956">
    <property type="term" value="C:glutamyl-tRNA(Gln) amidotransferase complex"/>
    <property type="evidence" value="ECO:0007669"/>
    <property type="project" value="InterPro"/>
</dbReference>
<dbReference type="GO" id="GO:0005524">
    <property type="term" value="F:ATP binding"/>
    <property type="evidence" value="ECO:0007669"/>
    <property type="project" value="UniProtKB-KW"/>
</dbReference>
<dbReference type="GO" id="GO:0050567">
    <property type="term" value="F:glutaminyl-tRNA synthase (glutamine-hydrolyzing) activity"/>
    <property type="evidence" value="ECO:0007669"/>
    <property type="project" value="UniProtKB-UniRule"/>
</dbReference>
<dbReference type="GO" id="GO:0006412">
    <property type="term" value="P:translation"/>
    <property type="evidence" value="ECO:0007669"/>
    <property type="project" value="UniProtKB-UniRule"/>
</dbReference>
<dbReference type="Gene3D" id="3.90.1300.10">
    <property type="entry name" value="Amidase signature (AS) domain"/>
    <property type="match status" value="1"/>
</dbReference>
<dbReference type="HAMAP" id="MF_00120">
    <property type="entry name" value="GatA"/>
    <property type="match status" value="1"/>
</dbReference>
<dbReference type="InterPro" id="IPR000120">
    <property type="entry name" value="Amidase"/>
</dbReference>
<dbReference type="InterPro" id="IPR020556">
    <property type="entry name" value="Amidase_CS"/>
</dbReference>
<dbReference type="InterPro" id="IPR023631">
    <property type="entry name" value="Amidase_dom"/>
</dbReference>
<dbReference type="InterPro" id="IPR036928">
    <property type="entry name" value="AS_sf"/>
</dbReference>
<dbReference type="InterPro" id="IPR004412">
    <property type="entry name" value="GatA"/>
</dbReference>
<dbReference type="NCBIfam" id="TIGR00132">
    <property type="entry name" value="gatA"/>
    <property type="match status" value="1"/>
</dbReference>
<dbReference type="PANTHER" id="PTHR11895:SF151">
    <property type="entry name" value="GLUTAMYL-TRNA(GLN) AMIDOTRANSFERASE SUBUNIT A"/>
    <property type="match status" value="1"/>
</dbReference>
<dbReference type="PANTHER" id="PTHR11895">
    <property type="entry name" value="TRANSAMIDASE"/>
    <property type="match status" value="1"/>
</dbReference>
<dbReference type="Pfam" id="PF01425">
    <property type="entry name" value="Amidase"/>
    <property type="match status" value="1"/>
</dbReference>
<dbReference type="SUPFAM" id="SSF75304">
    <property type="entry name" value="Amidase signature (AS) enzymes"/>
    <property type="match status" value="1"/>
</dbReference>
<dbReference type="PROSITE" id="PS00571">
    <property type="entry name" value="AMIDASES"/>
    <property type="match status" value="1"/>
</dbReference>
<reference key="1">
    <citation type="submission" date="2008-10" db="EMBL/GenBank/DDBJ databases">
        <title>Genome sequence of Bacillus cereus G9842.</title>
        <authorList>
            <person name="Dodson R.J."/>
            <person name="Durkin A.S."/>
            <person name="Rosovitz M.J."/>
            <person name="Rasko D.A."/>
            <person name="Hoffmaster A."/>
            <person name="Ravel J."/>
            <person name="Sutton G."/>
        </authorList>
    </citation>
    <scope>NUCLEOTIDE SEQUENCE [LARGE SCALE GENOMIC DNA]</scope>
    <source>
        <strain>G9842</strain>
    </source>
</reference>
<comment type="function">
    <text evidence="1">Allows the formation of correctly charged Gln-tRNA(Gln) through the transamidation of misacylated Glu-tRNA(Gln) in organisms which lack glutaminyl-tRNA synthetase. The reaction takes place in the presence of glutamine and ATP through an activated gamma-phospho-Glu-tRNA(Gln).</text>
</comment>
<comment type="catalytic activity">
    <reaction evidence="1">
        <text>L-glutamyl-tRNA(Gln) + L-glutamine + ATP + H2O = L-glutaminyl-tRNA(Gln) + L-glutamate + ADP + phosphate + H(+)</text>
        <dbReference type="Rhea" id="RHEA:17521"/>
        <dbReference type="Rhea" id="RHEA-COMP:9681"/>
        <dbReference type="Rhea" id="RHEA-COMP:9684"/>
        <dbReference type="ChEBI" id="CHEBI:15377"/>
        <dbReference type="ChEBI" id="CHEBI:15378"/>
        <dbReference type="ChEBI" id="CHEBI:29985"/>
        <dbReference type="ChEBI" id="CHEBI:30616"/>
        <dbReference type="ChEBI" id="CHEBI:43474"/>
        <dbReference type="ChEBI" id="CHEBI:58359"/>
        <dbReference type="ChEBI" id="CHEBI:78520"/>
        <dbReference type="ChEBI" id="CHEBI:78521"/>
        <dbReference type="ChEBI" id="CHEBI:456216"/>
        <dbReference type="EC" id="6.3.5.7"/>
    </reaction>
</comment>
<comment type="subunit">
    <text evidence="1">Heterotrimer of A, B and C subunits.</text>
</comment>
<comment type="similarity">
    <text evidence="1">Belongs to the amidase family. GatA subfamily.</text>
</comment>
<gene>
    <name evidence="1" type="primary">gatA</name>
    <name type="ordered locus">BCG9842_B4953</name>
</gene>
<proteinExistence type="inferred from homology"/>
<sequence>MSLFDHSVSELHKKLNNKEISVTDLVEESYKRIADVEDNVKAFLTLDEENARAKAKELDAKIGAEDNGLLFGMPIGVKDNIVTNGLRTTCASKMLANFDPIYDATVVQKLKAADTITIGKLNMDEFAMGSSNENSGFYATKNPWNLDYVPGGSSGGSAAAVAAGEVLFSLGSDTGGSIRQPAAYCGVVGLKPTYGRVSRYGLVAFASSLDQIGPITRTVEDNAYLLQAISGIDRMDATSANVEVGNYLAGLTGDVKGLRIAVPKEYLGEGVGEEARESVLAALKVLEGMGATWEEVSLPHSKYALATYYLLSSSEASANLSRFDGVRYGVRSDNVNNLLDLYKNTRSEGFGDEVKRRIMLGTFALSSGYYDAYYKKAQQVRTLIKNDFENVFANYDVIIGPTTPTPAFKVGEKVDDPMTMYANDILTIPVNLAGVPAISVPCGFGANNMPLGLQIIGKHFDEATIYRVAHAFEQATDYHTKKASL</sequence>
<feature type="chain" id="PRO_1000117604" description="Glutamyl-tRNA(Gln) amidotransferase subunit A">
    <location>
        <begin position="1"/>
        <end position="485"/>
    </location>
</feature>
<feature type="active site" description="Charge relay system" evidence="1">
    <location>
        <position position="78"/>
    </location>
</feature>
<feature type="active site" description="Charge relay system" evidence="1">
    <location>
        <position position="153"/>
    </location>
</feature>
<feature type="active site" description="Acyl-ester intermediate" evidence="1">
    <location>
        <position position="177"/>
    </location>
</feature>
<keyword id="KW-0067">ATP-binding</keyword>
<keyword id="KW-0436">Ligase</keyword>
<keyword id="KW-0547">Nucleotide-binding</keyword>
<keyword id="KW-0648">Protein biosynthesis</keyword>
<name>GATA_BACC2</name>
<organism>
    <name type="scientific">Bacillus cereus (strain G9842)</name>
    <dbReference type="NCBI Taxonomy" id="405531"/>
    <lineage>
        <taxon>Bacteria</taxon>
        <taxon>Bacillati</taxon>
        <taxon>Bacillota</taxon>
        <taxon>Bacilli</taxon>
        <taxon>Bacillales</taxon>
        <taxon>Bacillaceae</taxon>
        <taxon>Bacillus</taxon>
        <taxon>Bacillus cereus group</taxon>
    </lineage>
</organism>
<protein>
    <recommendedName>
        <fullName evidence="1">Glutamyl-tRNA(Gln) amidotransferase subunit A</fullName>
        <shortName evidence="1">Glu-ADT subunit A</shortName>
        <ecNumber evidence="1">6.3.5.7</ecNumber>
    </recommendedName>
</protein>
<evidence type="ECO:0000255" key="1">
    <source>
        <dbReference type="HAMAP-Rule" id="MF_00120"/>
    </source>
</evidence>
<accession>B7IUX9</accession>